<comment type="function">
    <text evidence="2">Aminopeptidase that preferentially cleaves di- and tripeptides. Also has low epoxide hydrolase activity (in vitro). Can hydrolyze the epoxide leukotriene LTA(4) but it forms preferentially 5,6-dihydroxy-7,9,11,14-eicosatetraenoic acid rather than the cytokine leukotriene B(4) as the product compared to the homologous mammalian enzyme (in vitro).</text>
</comment>
<comment type="catalytic activity">
    <reaction evidence="2">
        <text>an epoxide + H2O = an ethanediol</text>
        <dbReference type="Rhea" id="RHEA:19037"/>
        <dbReference type="ChEBI" id="CHEBI:15377"/>
        <dbReference type="ChEBI" id="CHEBI:32955"/>
        <dbReference type="ChEBI" id="CHEBI:140594"/>
        <dbReference type="EC" id="3.3.2.10"/>
    </reaction>
</comment>
<comment type="cofactor">
    <cofactor evidence="2">
        <name>Zn(2+)</name>
        <dbReference type="ChEBI" id="CHEBI:29105"/>
    </cofactor>
    <text evidence="2">Binds 1 zinc ion per subunit.</text>
</comment>
<comment type="subcellular location">
    <subcellularLocation>
        <location evidence="2">Cytoplasm</location>
    </subcellularLocation>
    <subcellularLocation>
        <location evidence="2">Nucleus</location>
    </subcellularLocation>
</comment>
<comment type="similarity">
    <text evidence="4">Belongs to the peptidase M1 family.</text>
</comment>
<organism>
    <name type="scientific">Chaetomium globosum (strain ATCC 6205 / CBS 148.51 / DSM 1962 / NBRC 6347 / NRRL 1970)</name>
    <name type="common">Soil fungus</name>
    <dbReference type="NCBI Taxonomy" id="306901"/>
    <lineage>
        <taxon>Eukaryota</taxon>
        <taxon>Fungi</taxon>
        <taxon>Dikarya</taxon>
        <taxon>Ascomycota</taxon>
        <taxon>Pezizomycotina</taxon>
        <taxon>Sordariomycetes</taxon>
        <taxon>Sordariomycetidae</taxon>
        <taxon>Sordariales</taxon>
        <taxon>Chaetomiaceae</taxon>
        <taxon>Chaetomium</taxon>
    </lineage>
</organism>
<gene>
    <name type="ORF">CHGG_07133</name>
</gene>
<evidence type="ECO:0000250" key="1">
    <source>
        <dbReference type="UniProtKB" id="P09960"/>
    </source>
</evidence>
<evidence type="ECO:0000250" key="2">
    <source>
        <dbReference type="UniProtKB" id="Q10740"/>
    </source>
</evidence>
<evidence type="ECO:0000255" key="3">
    <source>
        <dbReference type="PROSITE-ProRule" id="PRU10095"/>
    </source>
</evidence>
<evidence type="ECO:0000305" key="4"/>
<keyword id="KW-0963">Cytoplasm</keyword>
<keyword id="KW-0378">Hydrolase</keyword>
<keyword id="KW-0479">Metal-binding</keyword>
<keyword id="KW-0482">Metalloprotease</keyword>
<keyword id="KW-0539">Nucleus</keyword>
<keyword id="KW-0645">Protease</keyword>
<keyword id="KW-1185">Reference proteome</keyword>
<keyword id="KW-0862">Zinc</keyword>
<accession>Q2GY21</accession>
<protein>
    <recommendedName>
        <fullName>Leucine aminopeptidase 2</fullName>
        <ecNumber>3.4.11.-</ecNumber>
    </recommendedName>
    <alternativeName>
        <fullName>Epoxide hydrolase</fullName>
        <ecNumber>3.3.2.10</ecNumber>
    </alternativeName>
    <alternativeName>
        <fullName>Leukotriene A-4 hydrolase homolog</fullName>
        <shortName>LTA-4 hydrolase</shortName>
    </alternativeName>
</protein>
<feature type="chain" id="PRO_0000324926" description="Leucine aminopeptidase 2">
    <location>
        <begin position="1"/>
        <end position="611"/>
    </location>
</feature>
<feature type="active site" description="Proton acceptor" evidence="3">
    <location>
        <position position="295"/>
    </location>
</feature>
<feature type="active site" description="Proton donor" evidence="3">
    <location>
        <position position="383"/>
    </location>
</feature>
<feature type="binding site" evidence="1">
    <location>
        <begin position="135"/>
        <end position="137"/>
    </location>
    <ligand>
        <name>a peptide</name>
        <dbReference type="ChEBI" id="CHEBI:60466"/>
    </ligand>
</feature>
<feature type="binding site" evidence="1">
    <location>
        <begin position="265"/>
        <end position="270"/>
    </location>
    <ligand>
        <name>a peptide</name>
        <dbReference type="ChEBI" id="CHEBI:60466"/>
    </ligand>
</feature>
<feature type="binding site" evidence="3">
    <location>
        <position position="294"/>
    </location>
    <ligand>
        <name>Zn(2+)</name>
        <dbReference type="ChEBI" id="CHEBI:29105"/>
        <note>catalytic</note>
    </ligand>
</feature>
<feature type="binding site" evidence="3">
    <location>
        <position position="298"/>
    </location>
    <ligand>
        <name>Zn(2+)</name>
        <dbReference type="ChEBI" id="CHEBI:29105"/>
        <note>catalytic</note>
    </ligand>
</feature>
<feature type="binding site" evidence="3">
    <location>
        <position position="317"/>
    </location>
    <ligand>
        <name>Zn(2+)</name>
        <dbReference type="ChEBI" id="CHEBI:29105"/>
        <note>catalytic</note>
    </ligand>
</feature>
<reference key="1">
    <citation type="journal article" date="2015" name="Genome Announc.">
        <title>Draft genome sequence of the cellulolytic fungus Chaetomium globosum.</title>
        <authorList>
            <person name="Cuomo C.A."/>
            <person name="Untereiner W.A."/>
            <person name="Ma L.-J."/>
            <person name="Grabherr M."/>
            <person name="Birren B.W."/>
        </authorList>
    </citation>
    <scope>NUCLEOTIDE SEQUENCE [LARGE SCALE GENOMIC DNA]</scope>
    <source>
        <strain>ATCC 6205 / CBS 148.51 / DSM 1962 / NBRC 6347 / NRRL 1970</strain>
    </source>
</reference>
<proteinExistence type="inferred from homology"/>
<name>LKHA4_CHAGB</name>
<sequence length="611" mass="69072">MAPVRDPNTLSNYNEWRTKHTTADFKVDFTAKCLRGSVVLELESQTDKASKEIILDSSYVDVSAITLNSTPSQWEVRDRTGPSGSPVRVAVPNGAGKGEVVKLEIELATTDKCTALQWLTPAQTSNKKAPFMFSQCQAIHARSIFPCQDTPDVKSTYDFIIRSPHVVVASGVPVPGEPESVGEDKVYKFHQKVPIPSYLFAVASGDIASAKIGRCSSVATGPNELKASQWELEDDMDKFLDAAEKIVFPYQWGEYNVLVLPPSFPYGGMENPIFTFATPTIISGDRQNIDVIAHELAHSWSGNLVTSCSWEHFWLNEGWTVYLERRILASIHKNDSYFDFSAIIGWKHLEEAIEEFGKDHEYTKLSIKHDGIDPDDAFSSVPYEKGFHFIWSLDRLVGRENFDKFIPHYFSKWQNKSLDSFEFKDTFLEFFSAPEYSKLKDKISQIDWEGRFFNPGLPPKPEFDTTLVDGCFQLANKWKSKDFSPSPSDTSSWTGNQLLVFLNVVQDFEEPLTAEQSQNMGKIYALADSKNVELKAAYYQIAMKAKDTTSYPGVAELLGNVGRMKFVRTLFRTLNKVDRDLAVKTFQKNRDFYHPICRQLVEKDLGLGESK</sequence>
<dbReference type="EC" id="3.4.11.-"/>
<dbReference type="EC" id="3.3.2.10"/>
<dbReference type="EMBL" id="CH408033">
    <property type="protein sequence ID" value="EAQ85880.1"/>
    <property type="molecule type" value="Genomic_DNA"/>
</dbReference>
<dbReference type="RefSeq" id="XP_001224789.1">
    <property type="nucleotide sequence ID" value="XM_001224788.1"/>
</dbReference>
<dbReference type="SMR" id="Q2GY21"/>
<dbReference type="FunCoup" id="Q2GY21">
    <property type="interactions" value="906"/>
</dbReference>
<dbReference type="STRING" id="306901.Q2GY21"/>
<dbReference type="MEROPS" id="M01.034"/>
<dbReference type="GeneID" id="4393714"/>
<dbReference type="VEuPathDB" id="FungiDB:CHGG_07133"/>
<dbReference type="eggNOG" id="KOG1047">
    <property type="taxonomic scope" value="Eukaryota"/>
</dbReference>
<dbReference type="HOGENOM" id="CLU_014505_1_1_1"/>
<dbReference type="InParanoid" id="Q2GY21"/>
<dbReference type="OMA" id="CTALQWM"/>
<dbReference type="OrthoDB" id="79562at2759"/>
<dbReference type="Proteomes" id="UP000001056">
    <property type="component" value="Unassembled WGS sequence"/>
</dbReference>
<dbReference type="GO" id="GO:0005829">
    <property type="term" value="C:cytosol"/>
    <property type="evidence" value="ECO:0007669"/>
    <property type="project" value="TreeGrafter"/>
</dbReference>
<dbReference type="GO" id="GO:0000328">
    <property type="term" value="C:fungal-type vacuole lumen"/>
    <property type="evidence" value="ECO:0007669"/>
    <property type="project" value="EnsemblFungi"/>
</dbReference>
<dbReference type="GO" id="GO:0005771">
    <property type="term" value="C:multivesicular body"/>
    <property type="evidence" value="ECO:0007669"/>
    <property type="project" value="EnsemblFungi"/>
</dbReference>
<dbReference type="GO" id="GO:0005634">
    <property type="term" value="C:nucleus"/>
    <property type="evidence" value="ECO:0007669"/>
    <property type="project" value="UniProtKB-SubCell"/>
</dbReference>
<dbReference type="GO" id="GO:0061957">
    <property type="term" value="C:NVT complex"/>
    <property type="evidence" value="ECO:0007669"/>
    <property type="project" value="EnsemblFungi"/>
</dbReference>
<dbReference type="GO" id="GO:0004177">
    <property type="term" value="F:aminopeptidase activity"/>
    <property type="evidence" value="ECO:0000250"/>
    <property type="project" value="UniProtKB"/>
</dbReference>
<dbReference type="GO" id="GO:0004301">
    <property type="term" value="F:epoxide hydrolase activity"/>
    <property type="evidence" value="ECO:0000250"/>
    <property type="project" value="UniProtKB"/>
</dbReference>
<dbReference type="GO" id="GO:0008237">
    <property type="term" value="F:metallopeptidase activity"/>
    <property type="evidence" value="ECO:0007669"/>
    <property type="project" value="UniProtKB-KW"/>
</dbReference>
<dbReference type="GO" id="GO:0008270">
    <property type="term" value="F:zinc ion binding"/>
    <property type="evidence" value="ECO:0000250"/>
    <property type="project" value="UniProtKB"/>
</dbReference>
<dbReference type="GO" id="GO:0120113">
    <property type="term" value="P:cytoplasm to vacuole targeting by the NVT pathway"/>
    <property type="evidence" value="ECO:0007669"/>
    <property type="project" value="EnsemblFungi"/>
</dbReference>
<dbReference type="GO" id="GO:0006629">
    <property type="term" value="P:lipid metabolic process"/>
    <property type="evidence" value="ECO:0007669"/>
    <property type="project" value="EnsemblFungi"/>
</dbReference>
<dbReference type="GO" id="GO:0043171">
    <property type="term" value="P:peptide catabolic process"/>
    <property type="evidence" value="ECO:0000250"/>
    <property type="project" value="UniProtKB"/>
</dbReference>
<dbReference type="GO" id="GO:0030163">
    <property type="term" value="P:protein catabolic process"/>
    <property type="evidence" value="ECO:0007669"/>
    <property type="project" value="EnsemblFungi"/>
</dbReference>
<dbReference type="GO" id="GO:0006508">
    <property type="term" value="P:proteolysis"/>
    <property type="evidence" value="ECO:0007669"/>
    <property type="project" value="UniProtKB-KW"/>
</dbReference>
<dbReference type="CDD" id="cd09599">
    <property type="entry name" value="M1_LTA4H"/>
    <property type="match status" value="1"/>
</dbReference>
<dbReference type="FunFam" id="1.10.390.10:FF:000009">
    <property type="entry name" value="Leukotriene A(4) hydrolase"/>
    <property type="match status" value="1"/>
</dbReference>
<dbReference type="FunFam" id="1.25.40.320:FF:000001">
    <property type="entry name" value="Leukotriene A(4) hydrolase"/>
    <property type="match status" value="1"/>
</dbReference>
<dbReference type="FunFam" id="2.60.40.1730:FF:000004">
    <property type="entry name" value="Leukotriene A(4) hydrolase"/>
    <property type="match status" value="1"/>
</dbReference>
<dbReference type="FunFam" id="3.30.2010.30:FF:000001">
    <property type="entry name" value="Leukotriene A(4) hydrolase"/>
    <property type="match status" value="1"/>
</dbReference>
<dbReference type="Gene3D" id="3.30.2010.30">
    <property type="match status" value="1"/>
</dbReference>
<dbReference type="Gene3D" id="1.10.390.10">
    <property type="entry name" value="Neutral Protease Domain 2"/>
    <property type="match status" value="1"/>
</dbReference>
<dbReference type="Gene3D" id="1.25.40.320">
    <property type="entry name" value="Peptidase M1, leukotriene A4 hydrolase/aminopeptidase C-terminal domain"/>
    <property type="match status" value="1"/>
</dbReference>
<dbReference type="Gene3D" id="2.60.40.1730">
    <property type="entry name" value="tricorn interacting facor f3 domain"/>
    <property type="match status" value="1"/>
</dbReference>
<dbReference type="InterPro" id="IPR045357">
    <property type="entry name" value="Aminopeptidase_N-like_N"/>
</dbReference>
<dbReference type="InterPro" id="IPR042097">
    <property type="entry name" value="Aminopeptidase_N-like_N_sf"/>
</dbReference>
<dbReference type="InterPro" id="IPR016024">
    <property type="entry name" value="ARM-type_fold"/>
</dbReference>
<dbReference type="InterPro" id="IPR012777">
    <property type="entry name" value="LTA4H"/>
</dbReference>
<dbReference type="InterPro" id="IPR049980">
    <property type="entry name" value="LTA4H_cat"/>
</dbReference>
<dbReference type="InterPro" id="IPR038502">
    <property type="entry name" value="M1_LTA-4_hydro/amino_C_sf"/>
</dbReference>
<dbReference type="InterPro" id="IPR034015">
    <property type="entry name" value="M1_LTA4H"/>
</dbReference>
<dbReference type="InterPro" id="IPR001930">
    <property type="entry name" value="Peptidase_M1"/>
</dbReference>
<dbReference type="InterPro" id="IPR015211">
    <property type="entry name" value="Peptidase_M1_C"/>
</dbReference>
<dbReference type="InterPro" id="IPR014782">
    <property type="entry name" value="Peptidase_M1_dom"/>
</dbReference>
<dbReference type="InterPro" id="IPR027268">
    <property type="entry name" value="Peptidase_M4/M1_CTD_sf"/>
</dbReference>
<dbReference type="NCBIfam" id="TIGR02411">
    <property type="entry name" value="leuko_A4_hydro"/>
    <property type="match status" value="1"/>
</dbReference>
<dbReference type="PANTHER" id="PTHR45726">
    <property type="entry name" value="LEUKOTRIENE A-4 HYDROLASE"/>
    <property type="match status" value="1"/>
</dbReference>
<dbReference type="PANTHER" id="PTHR45726:SF3">
    <property type="entry name" value="LEUKOTRIENE A-4 HYDROLASE"/>
    <property type="match status" value="1"/>
</dbReference>
<dbReference type="Pfam" id="PF09127">
    <property type="entry name" value="Leuk-A4-hydro_C"/>
    <property type="match status" value="1"/>
</dbReference>
<dbReference type="Pfam" id="PF01433">
    <property type="entry name" value="Peptidase_M1"/>
    <property type="match status" value="1"/>
</dbReference>
<dbReference type="Pfam" id="PF17900">
    <property type="entry name" value="Peptidase_M1_N"/>
    <property type="match status" value="1"/>
</dbReference>
<dbReference type="PRINTS" id="PR00756">
    <property type="entry name" value="ALADIPTASE"/>
</dbReference>
<dbReference type="SMART" id="SM01263">
    <property type="entry name" value="Leuk-A4-hydro_C"/>
    <property type="match status" value="1"/>
</dbReference>
<dbReference type="SUPFAM" id="SSF48371">
    <property type="entry name" value="ARM repeat"/>
    <property type="match status" value="1"/>
</dbReference>
<dbReference type="SUPFAM" id="SSF63737">
    <property type="entry name" value="Leukotriene A4 hydrolase N-terminal domain"/>
    <property type="match status" value="1"/>
</dbReference>
<dbReference type="SUPFAM" id="SSF55486">
    <property type="entry name" value="Metalloproteases ('zincins'), catalytic domain"/>
    <property type="match status" value="1"/>
</dbReference>
<dbReference type="PROSITE" id="PS00142">
    <property type="entry name" value="ZINC_PROTEASE"/>
    <property type="match status" value="1"/>
</dbReference>